<dbReference type="EMBL" id="CP000891">
    <property type="protein sequence ID" value="ABX51663.1"/>
    <property type="molecule type" value="Genomic_DNA"/>
</dbReference>
<dbReference type="RefSeq" id="WP_006083846.1">
    <property type="nucleotide sequence ID" value="NC_009997.1"/>
</dbReference>
<dbReference type="SMR" id="A9KX05"/>
<dbReference type="KEGG" id="sbn:Sbal195_4506"/>
<dbReference type="HOGENOM" id="CLU_084338_2_0_6"/>
<dbReference type="Proteomes" id="UP000000770">
    <property type="component" value="Chromosome"/>
</dbReference>
<dbReference type="GO" id="GO:0005886">
    <property type="term" value="C:plasma membrane"/>
    <property type="evidence" value="ECO:0007669"/>
    <property type="project" value="UniProtKB-SubCell"/>
</dbReference>
<dbReference type="GO" id="GO:0045259">
    <property type="term" value="C:proton-transporting ATP synthase complex"/>
    <property type="evidence" value="ECO:0007669"/>
    <property type="project" value="UniProtKB-KW"/>
</dbReference>
<dbReference type="GO" id="GO:0005524">
    <property type="term" value="F:ATP binding"/>
    <property type="evidence" value="ECO:0007669"/>
    <property type="project" value="UniProtKB-UniRule"/>
</dbReference>
<dbReference type="GO" id="GO:0046933">
    <property type="term" value="F:proton-transporting ATP synthase activity, rotational mechanism"/>
    <property type="evidence" value="ECO:0007669"/>
    <property type="project" value="UniProtKB-UniRule"/>
</dbReference>
<dbReference type="CDD" id="cd12152">
    <property type="entry name" value="F1-ATPase_delta"/>
    <property type="match status" value="1"/>
</dbReference>
<dbReference type="FunFam" id="1.20.5.440:FF:000001">
    <property type="entry name" value="ATP synthase epsilon chain"/>
    <property type="match status" value="1"/>
</dbReference>
<dbReference type="FunFam" id="2.60.15.10:FF:000001">
    <property type="entry name" value="ATP synthase epsilon chain"/>
    <property type="match status" value="1"/>
</dbReference>
<dbReference type="Gene3D" id="1.20.5.440">
    <property type="entry name" value="ATP synthase delta/epsilon subunit, C-terminal domain"/>
    <property type="match status" value="1"/>
</dbReference>
<dbReference type="Gene3D" id="2.60.15.10">
    <property type="entry name" value="F0F1 ATP synthase delta/epsilon subunit, N-terminal"/>
    <property type="match status" value="1"/>
</dbReference>
<dbReference type="HAMAP" id="MF_00530">
    <property type="entry name" value="ATP_synth_epsil_bac"/>
    <property type="match status" value="1"/>
</dbReference>
<dbReference type="InterPro" id="IPR036794">
    <property type="entry name" value="ATP_F1_dsu/esu_C_sf"/>
</dbReference>
<dbReference type="InterPro" id="IPR001469">
    <property type="entry name" value="ATP_synth_F1_dsu/esu"/>
</dbReference>
<dbReference type="InterPro" id="IPR020546">
    <property type="entry name" value="ATP_synth_F1_dsu/esu_N"/>
</dbReference>
<dbReference type="InterPro" id="IPR020547">
    <property type="entry name" value="ATP_synth_F1_esu_C"/>
</dbReference>
<dbReference type="InterPro" id="IPR036771">
    <property type="entry name" value="ATPsynth_dsu/esu_N"/>
</dbReference>
<dbReference type="NCBIfam" id="TIGR01216">
    <property type="entry name" value="ATP_synt_epsi"/>
    <property type="match status" value="1"/>
</dbReference>
<dbReference type="NCBIfam" id="NF001847">
    <property type="entry name" value="PRK00571.1-4"/>
    <property type="match status" value="1"/>
</dbReference>
<dbReference type="PANTHER" id="PTHR13822">
    <property type="entry name" value="ATP SYNTHASE DELTA/EPSILON CHAIN"/>
    <property type="match status" value="1"/>
</dbReference>
<dbReference type="PANTHER" id="PTHR13822:SF10">
    <property type="entry name" value="ATP SYNTHASE EPSILON CHAIN, CHLOROPLASTIC"/>
    <property type="match status" value="1"/>
</dbReference>
<dbReference type="Pfam" id="PF00401">
    <property type="entry name" value="ATP-synt_DE"/>
    <property type="match status" value="1"/>
</dbReference>
<dbReference type="Pfam" id="PF02823">
    <property type="entry name" value="ATP-synt_DE_N"/>
    <property type="match status" value="1"/>
</dbReference>
<dbReference type="SUPFAM" id="SSF46604">
    <property type="entry name" value="Epsilon subunit of F1F0-ATP synthase C-terminal domain"/>
    <property type="match status" value="1"/>
</dbReference>
<dbReference type="SUPFAM" id="SSF51344">
    <property type="entry name" value="Epsilon subunit of F1F0-ATP synthase N-terminal domain"/>
    <property type="match status" value="1"/>
</dbReference>
<evidence type="ECO:0000255" key="1">
    <source>
        <dbReference type="HAMAP-Rule" id="MF_00530"/>
    </source>
</evidence>
<feature type="chain" id="PRO_1000081744" description="ATP synthase epsilon chain">
    <location>
        <begin position="1"/>
        <end position="142"/>
    </location>
</feature>
<keyword id="KW-0066">ATP synthesis</keyword>
<keyword id="KW-0997">Cell inner membrane</keyword>
<keyword id="KW-1003">Cell membrane</keyword>
<keyword id="KW-0139">CF(1)</keyword>
<keyword id="KW-0375">Hydrogen ion transport</keyword>
<keyword id="KW-0406">Ion transport</keyword>
<keyword id="KW-0472">Membrane</keyword>
<keyword id="KW-0813">Transport</keyword>
<proteinExistence type="inferred from homology"/>
<organism>
    <name type="scientific">Shewanella baltica (strain OS195)</name>
    <dbReference type="NCBI Taxonomy" id="399599"/>
    <lineage>
        <taxon>Bacteria</taxon>
        <taxon>Pseudomonadati</taxon>
        <taxon>Pseudomonadota</taxon>
        <taxon>Gammaproteobacteria</taxon>
        <taxon>Alteromonadales</taxon>
        <taxon>Shewanellaceae</taxon>
        <taxon>Shewanella</taxon>
    </lineage>
</organism>
<gene>
    <name evidence="1" type="primary">atpC</name>
    <name type="ordered locus">Sbal195_4506</name>
</gene>
<comment type="function">
    <text evidence="1">Produces ATP from ADP in the presence of a proton gradient across the membrane.</text>
</comment>
<comment type="subunit">
    <text evidence="1">F-type ATPases have 2 components, CF(1) - the catalytic core - and CF(0) - the membrane proton channel. CF(1) has five subunits: alpha(3), beta(3), gamma(1), delta(1), epsilon(1). CF(0) has three main subunits: a, b and c.</text>
</comment>
<comment type="subcellular location">
    <subcellularLocation>
        <location evidence="1">Cell inner membrane</location>
        <topology evidence="1">Peripheral membrane protein</topology>
    </subcellularLocation>
</comment>
<comment type="similarity">
    <text evidence="1">Belongs to the ATPase epsilon chain family.</text>
</comment>
<sequence>MAAMTVHLDIVSAESKIFSGRVASLQVTGSEGELGIMHGHAPLLSYIKPGMARIVKQDGSEEVFYLSGGILEVQPSTVSVLADVVMRAKDIDEQAALEAKRRAEAHMANAGADFNYDAAMVELAKAMAQLRVVETIKKNIAR</sequence>
<name>ATPE_SHEB9</name>
<accession>A9KX05</accession>
<protein>
    <recommendedName>
        <fullName evidence="1">ATP synthase epsilon chain</fullName>
    </recommendedName>
    <alternativeName>
        <fullName evidence="1">ATP synthase F1 sector epsilon subunit</fullName>
    </alternativeName>
    <alternativeName>
        <fullName evidence="1">F-ATPase epsilon subunit</fullName>
    </alternativeName>
</protein>
<reference key="1">
    <citation type="submission" date="2007-11" db="EMBL/GenBank/DDBJ databases">
        <title>Complete sequence of chromosome of Shewanella baltica OS195.</title>
        <authorList>
            <consortium name="US DOE Joint Genome Institute"/>
            <person name="Copeland A."/>
            <person name="Lucas S."/>
            <person name="Lapidus A."/>
            <person name="Barry K."/>
            <person name="Glavina del Rio T."/>
            <person name="Dalin E."/>
            <person name="Tice H."/>
            <person name="Pitluck S."/>
            <person name="Chain P."/>
            <person name="Malfatti S."/>
            <person name="Shin M."/>
            <person name="Vergez L."/>
            <person name="Schmutz J."/>
            <person name="Larimer F."/>
            <person name="Land M."/>
            <person name="Hauser L."/>
            <person name="Kyrpides N."/>
            <person name="Kim E."/>
            <person name="Brettar I."/>
            <person name="Rodrigues J."/>
            <person name="Konstantinidis K."/>
            <person name="Klappenbach J."/>
            <person name="Hofle M."/>
            <person name="Tiedje J."/>
            <person name="Richardson P."/>
        </authorList>
    </citation>
    <scope>NUCLEOTIDE SEQUENCE [LARGE SCALE GENOMIC DNA]</scope>
    <source>
        <strain>OS195</strain>
    </source>
</reference>